<comment type="function">
    <text evidence="1">The RuvA-RuvB-RuvC complex processes Holliday junction (HJ) DNA during genetic recombination and DNA repair, while the RuvA-RuvB complex plays an important role in the rescue of blocked DNA replication forks via replication fork reversal (RFR). RuvA specifically binds to HJ cruciform DNA, conferring on it an open structure. The RuvB hexamer acts as an ATP-dependent pump, pulling dsDNA into and through the RuvAB complex. RuvB forms 2 homohexamers on either side of HJ DNA bound by 1 or 2 RuvA tetramers; 4 subunits per hexamer contact DNA at a time. Coordinated motions by a converter formed by DNA-disengaged RuvB subunits stimulates ATP hydrolysis and nucleotide exchange. Immobilization of the converter enables RuvB to convert the ATP-contained energy into a lever motion, pulling 2 nucleotides of DNA out of the RuvA tetramer per ATP hydrolyzed, thus driving DNA branch migration. The RuvB motors rotate together with the DNA substrate, which together with the progressing nucleotide cycle form the mechanistic basis for DNA recombination by continuous HJ branch migration. Branch migration allows RuvC to scan DNA until it finds its consensus sequence, where it cleaves and resolves cruciform DNA.</text>
</comment>
<comment type="catalytic activity">
    <reaction evidence="1">
        <text>ATP + H2O = ADP + phosphate + H(+)</text>
        <dbReference type="Rhea" id="RHEA:13065"/>
        <dbReference type="ChEBI" id="CHEBI:15377"/>
        <dbReference type="ChEBI" id="CHEBI:15378"/>
        <dbReference type="ChEBI" id="CHEBI:30616"/>
        <dbReference type="ChEBI" id="CHEBI:43474"/>
        <dbReference type="ChEBI" id="CHEBI:456216"/>
    </reaction>
</comment>
<comment type="subunit">
    <text evidence="1">Homohexamer. Forms an RuvA(8)-RuvB(12)-Holliday junction (HJ) complex. HJ DNA is sandwiched between 2 RuvA tetramers; dsDNA enters through RuvA and exits via RuvB. An RuvB hexamer assembles on each DNA strand where it exits the tetramer. Each RuvB hexamer is contacted by two RuvA subunits (via domain III) on 2 adjacent RuvB subunits; this complex drives branch migration. In the full resolvosome a probable DNA-RuvA(4)-RuvB(12)-RuvC(2) complex forms which resolves the HJ.</text>
</comment>
<comment type="subcellular location">
    <subcellularLocation>
        <location evidence="1">Cytoplasm</location>
    </subcellularLocation>
</comment>
<comment type="domain">
    <text evidence="1">Has 3 domains, the large (RuvB-L) and small ATPase (RuvB-S) domains and the C-terminal head (RuvB-H) domain. The head domain binds DNA, while the ATPase domains jointly bind ATP, ADP or are empty depending on the state of the subunit in the translocation cycle. During a single DNA translocation step the structure of each domain remains the same, but their relative positions change.</text>
</comment>
<comment type="similarity">
    <text evidence="1">Belongs to the RuvB family.</text>
</comment>
<keyword id="KW-0002">3D-structure</keyword>
<keyword id="KW-0067">ATP-binding</keyword>
<keyword id="KW-0963">Cytoplasm</keyword>
<keyword id="KW-0227">DNA damage</keyword>
<keyword id="KW-0233">DNA recombination</keyword>
<keyword id="KW-0234">DNA repair</keyword>
<keyword id="KW-0238">DNA-binding</keyword>
<keyword id="KW-0378">Hydrolase</keyword>
<keyword id="KW-0547">Nucleotide-binding</keyword>
<keyword id="KW-1185">Reference proteome</keyword>
<name>RUVB_CAMJE</name>
<protein>
    <recommendedName>
        <fullName evidence="1">Holliday junction branch migration complex subunit RuvB</fullName>
        <ecNumber evidence="1">3.6.4.-</ecNumber>
    </recommendedName>
</protein>
<evidence type="ECO:0000255" key="1">
    <source>
        <dbReference type="HAMAP-Rule" id="MF_00016"/>
    </source>
</evidence>
<evidence type="ECO:0000303" key="2">
    <source>
    </source>
</evidence>
<evidence type="ECO:0007744" key="3">
    <source>
        <dbReference type="PDB" id="3PFI"/>
    </source>
</evidence>
<evidence type="ECO:0007829" key="4">
    <source>
        <dbReference type="PDB" id="3PFI"/>
    </source>
</evidence>
<dbReference type="EC" id="3.6.4.-" evidence="1"/>
<dbReference type="EMBL" id="AL111168">
    <property type="protein sequence ID" value="CAL35474.1"/>
    <property type="molecule type" value="Genomic_DNA"/>
</dbReference>
<dbReference type="PIR" id="G81280">
    <property type="entry name" value="G81280"/>
</dbReference>
<dbReference type="RefSeq" id="WP_002856258.1">
    <property type="nucleotide sequence ID" value="NZ_SZUC01000003.1"/>
</dbReference>
<dbReference type="RefSeq" id="YP_002344750.1">
    <property type="nucleotide sequence ID" value="NC_002163.1"/>
</dbReference>
<dbReference type="PDB" id="3PFI">
    <property type="method" value="X-ray"/>
    <property type="resolution" value="2.69 A"/>
    <property type="chains" value="A/B=1-335"/>
</dbReference>
<dbReference type="PDBsum" id="3PFI"/>
<dbReference type="SMR" id="Q9PMT7"/>
<dbReference type="IntAct" id="Q9PMT7">
    <property type="interactions" value="9"/>
</dbReference>
<dbReference type="STRING" id="192222.Cj1362"/>
<dbReference type="PaxDb" id="192222-Cj1362"/>
<dbReference type="EnsemblBacteria" id="CAL35474">
    <property type="protein sequence ID" value="CAL35474"/>
    <property type="gene ID" value="Cj1362"/>
</dbReference>
<dbReference type="GeneID" id="905655"/>
<dbReference type="KEGG" id="cje:Cj1362"/>
<dbReference type="PATRIC" id="fig|192222.6.peg.1343"/>
<dbReference type="eggNOG" id="COG2255">
    <property type="taxonomic scope" value="Bacteria"/>
</dbReference>
<dbReference type="HOGENOM" id="CLU_055599_1_0_7"/>
<dbReference type="OrthoDB" id="9804478at2"/>
<dbReference type="EvolutionaryTrace" id="Q9PMT7"/>
<dbReference type="Proteomes" id="UP000000799">
    <property type="component" value="Chromosome"/>
</dbReference>
<dbReference type="GO" id="GO:0005737">
    <property type="term" value="C:cytoplasm"/>
    <property type="evidence" value="ECO:0007669"/>
    <property type="project" value="UniProtKB-SubCell"/>
</dbReference>
<dbReference type="GO" id="GO:0048476">
    <property type="term" value="C:Holliday junction resolvase complex"/>
    <property type="evidence" value="ECO:0007669"/>
    <property type="project" value="UniProtKB-UniRule"/>
</dbReference>
<dbReference type="GO" id="GO:0005524">
    <property type="term" value="F:ATP binding"/>
    <property type="evidence" value="ECO:0007669"/>
    <property type="project" value="UniProtKB-UniRule"/>
</dbReference>
<dbReference type="GO" id="GO:0016887">
    <property type="term" value="F:ATP hydrolysis activity"/>
    <property type="evidence" value="ECO:0007669"/>
    <property type="project" value="InterPro"/>
</dbReference>
<dbReference type="GO" id="GO:0000400">
    <property type="term" value="F:four-way junction DNA binding"/>
    <property type="evidence" value="ECO:0007669"/>
    <property type="project" value="UniProtKB-UniRule"/>
</dbReference>
<dbReference type="GO" id="GO:0009378">
    <property type="term" value="F:four-way junction helicase activity"/>
    <property type="evidence" value="ECO:0007669"/>
    <property type="project" value="InterPro"/>
</dbReference>
<dbReference type="GO" id="GO:0006310">
    <property type="term" value="P:DNA recombination"/>
    <property type="evidence" value="ECO:0007669"/>
    <property type="project" value="UniProtKB-UniRule"/>
</dbReference>
<dbReference type="GO" id="GO:0006281">
    <property type="term" value="P:DNA repair"/>
    <property type="evidence" value="ECO:0007669"/>
    <property type="project" value="UniProtKB-UniRule"/>
</dbReference>
<dbReference type="CDD" id="cd00009">
    <property type="entry name" value="AAA"/>
    <property type="match status" value="1"/>
</dbReference>
<dbReference type="Gene3D" id="1.10.8.60">
    <property type="match status" value="1"/>
</dbReference>
<dbReference type="Gene3D" id="3.40.50.300">
    <property type="entry name" value="P-loop containing nucleotide triphosphate hydrolases"/>
    <property type="match status" value="1"/>
</dbReference>
<dbReference type="Gene3D" id="1.10.10.10">
    <property type="entry name" value="Winged helix-like DNA-binding domain superfamily/Winged helix DNA-binding domain"/>
    <property type="match status" value="1"/>
</dbReference>
<dbReference type="HAMAP" id="MF_00016">
    <property type="entry name" value="DNA_HJ_migration_RuvB"/>
    <property type="match status" value="1"/>
</dbReference>
<dbReference type="InterPro" id="IPR003593">
    <property type="entry name" value="AAA+_ATPase"/>
</dbReference>
<dbReference type="InterPro" id="IPR041445">
    <property type="entry name" value="AAA_lid_4"/>
</dbReference>
<dbReference type="InterPro" id="IPR004605">
    <property type="entry name" value="DNA_helicase_Holl-junc_RuvB"/>
</dbReference>
<dbReference type="InterPro" id="IPR027417">
    <property type="entry name" value="P-loop_NTPase"/>
</dbReference>
<dbReference type="InterPro" id="IPR008824">
    <property type="entry name" value="RuvB-like_N"/>
</dbReference>
<dbReference type="InterPro" id="IPR008823">
    <property type="entry name" value="RuvB_C"/>
</dbReference>
<dbReference type="InterPro" id="IPR036388">
    <property type="entry name" value="WH-like_DNA-bd_sf"/>
</dbReference>
<dbReference type="InterPro" id="IPR036390">
    <property type="entry name" value="WH_DNA-bd_sf"/>
</dbReference>
<dbReference type="NCBIfam" id="NF000868">
    <property type="entry name" value="PRK00080.1"/>
    <property type="match status" value="1"/>
</dbReference>
<dbReference type="NCBIfam" id="TIGR00635">
    <property type="entry name" value="ruvB"/>
    <property type="match status" value="1"/>
</dbReference>
<dbReference type="PANTHER" id="PTHR42848">
    <property type="match status" value="1"/>
</dbReference>
<dbReference type="PANTHER" id="PTHR42848:SF1">
    <property type="entry name" value="HOLLIDAY JUNCTION BRANCH MIGRATION COMPLEX SUBUNIT RUVB"/>
    <property type="match status" value="1"/>
</dbReference>
<dbReference type="Pfam" id="PF17864">
    <property type="entry name" value="AAA_lid_4"/>
    <property type="match status" value="1"/>
</dbReference>
<dbReference type="Pfam" id="PF05491">
    <property type="entry name" value="RuvB_C"/>
    <property type="match status" value="1"/>
</dbReference>
<dbReference type="Pfam" id="PF05496">
    <property type="entry name" value="RuvB_N"/>
    <property type="match status" value="1"/>
</dbReference>
<dbReference type="SMART" id="SM00382">
    <property type="entry name" value="AAA"/>
    <property type="match status" value="1"/>
</dbReference>
<dbReference type="SUPFAM" id="SSF52540">
    <property type="entry name" value="P-loop containing nucleoside triphosphate hydrolases"/>
    <property type="match status" value="1"/>
</dbReference>
<dbReference type="SUPFAM" id="SSF46785">
    <property type="entry name" value="Winged helix' DNA-binding domain"/>
    <property type="match status" value="1"/>
</dbReference>
<sequence>MDRIVEIEKYSFDETYETSLRPSNFDGYIGQESIKKNLNVFIAAAKKRNECLDHILFSGPAGLGKTTLANIISYEMSANIKTTAAPMIEKSGDLAAILTNLSEGDILFIDEIHRLSPAIEEVLYPAMEDYRLDIIIGSGPAAQTIKIDLPKFTLIGATTRAGMLSNPLRDRFGMQFRLEFYKDSELALILQKAALKLNKTCEEKAALEIAKRSRSTPRIALRLLKRVRDFADVNDEEIITEKRANEALNSLGVNELGFDAMDLRYLELLTAAKQKPIGLASIAAALSEDENTIEDVIEPYLLANGYIERTAKGRIASAKSYSALKLNYEKTLFEE</sequence>
<accession>Q9PMT7</accession>
<accession>Q0P8P7</accession>
<feature type="chain" id="PRO_0000165510" description="Holliday junction branch migration complex subunit RuvB">
    <location>
        <begin position="1"/>
        <end position="335"/>
    </location>
</feature>
<feature type="region of interest" description="Large ATPase domain (RuvB-L)" evidence="1">
    <location>
        <begin position="1"/>
        <end position="181"/>
    </location>
</feature>
<feature type="region of interest" description="Small ATPAse domain (RuvB-S)" evidence="1">
    <location>
        <begin position="182"/>
        <end position="252"/>
    </location>
</feature>
<feature type="region of interest" description="Head domain (RuvB-H)" evidence="1">
    <location>
        <begin position="255"/>
        <end position="335"/>
    </location>
</feature>
<feature type="binding site" evidence="1">
    <location>
        <position position="20"/>
    </location>
    <ligand>
        <name>ATP</name>
        <dbReference type="ChEBI" id="CHEBI:30616"/>
    </ligand>
</feature>
<feature type="binding site" evidence="1 3">
    <location>
        <position position="21"/>
    </location>
    <ligand>
        <name>ADP</name>
        <dbReference type="ChEBI" id="CHEBI:456216"/>
    </ligand>
</feature>
<feature type="binding site" evidence="3">
    <location>
        <position position="28"/>
    </location>
    <ligand>
        <name>ADP</name>
        <dbReference type="ChEBI" id="CHEBI:456216"/>
    </ligand>
</feature>
<feature type="binding site" evidence="3">
    <location>
        <position position="29"/>
    </location>
    <ligand>
        <name>ADP</name>
        <dbReference type="ChEBI" id="CHEBI:456216"/>
    </ligand>
</feature>
<feature type="binding site" evidence="1 3">
    <location>
        <position position="62"/>
    </location>
    <ligand>
        <name>ADP</name>
        <dbReference type="ChEBI" id="CHEBI:456216"/>
    </ligand>
</feature>
<feature type="binding site" evidence="3">
    <location>
        <position position="63"/>
    </location>
    <ligand>
        <name>ADP</name>
        <dbReference type="ChEBI" id="CHEBI:456216"/>
    </ligand>
</feature>
<feature type="binding site" evidence="3">
    <location>
        <position position="64"/>
    </location>
    <ligand>
        <name>ADP</name>
        <dbReference type="ChEBI" id="CHEBI:456216"/>
    </ligand>
</feature>
<feature type="binding site" evidence="1 3">
    <location>
        <position position="65"/>
    </location>
    <ligand>
        <name>ADP</name>
        <dbReference type="ChEBI" id="CHEBI:456216"/>
    </ligand>
</feature>
<feature type="binding site" evidence="1 3">
    <location>
        <position position="66"/>
    </location>
    <ligand>
        <name>ADP</name>
        <dbReference type="ChEBI" id="CHEBI:456216"/>
    </ligand>
</feature>
<feature type="binding site" evidence="1 3">
    <location>
        <position position="67"/>
    </location>
    <ligand>
        <name>ADP</name>
        <dbReference type="ChEBI" id="CHEBI:456216"/>
    </ligand>
</feature>
<feature type="binding site" evidence="1">
    <location>
        <begin position="128"/>
        <end position="130"/>
    </location>
    <ligand>
        <name>ATP</name>
        <dbReference type="ChEBI" id="CHEBI:30616"/>
    </ligand>
</feature>
<feature type="binding site" evidence="1">
    <location>
        <position position="171"/>
    </location>
    <ligand>
        <name>ATP</name>
        <dbReference type="ChEBI" id="CHEBI:30616"/>
    </ligand>
</feature>
<feature type="binding site" evidence="1 3">
    <location>
        <position position="181"/>
    </location>
    <ligand>
        <name>ADP</name>
        <dbReference type="ChEBI" id="CHEBI:456216"/>
    </ligand>
</feature>
<feature type="binding site" evidence="1 3">
    <location>
        <position position="218"/>
    </location>
    <ligand>
        <name>ADP</name>
        <dbReference type="ChEBI" id="CHEBI:456216"/>
    </ligand>
</feature>
<feature type="binding site" evidence="1">
    <location>
        <position position="309"/>
    </location>
    <ligand>
        <name>DNA</name>
        <dbReference type="ChEBI" id="CHEBI:16991"/>
    </ligand>
</feature>
<feature type="binding site" evidence="1">
    <location>
        <position position="314"/>
    </location>
    <ligand>
        <name>DNA</name>
        <dbReference type="ChEBI" id="CHEBI:16991"/>
    </ligand>
</feature>
<feature type="helix" evidence="4">
    <location>
        <begin position="25"/>
        <end position="27"/>
    </location>
</feature>
<feature type="helix" evidence="4">
    <location>
        <begin position="32"/>
        <end position="47"/>
    </location>
</feature>
<feature type="strand" evidence="4">
    <location>
        <begin position="55"/>
        <end position="58"/>
    </location>
</feature>
<feature type="helix" evidence="4">
    <location>
        <begin position="65"/>
        <end position="75"/>
    </location>
</feature>
<feature type="strand" evidence="4">
    <location>
        <begin position="80"/>
        <end position="84"/>
    </location>
</feature>
<feature type="helix" evidence="4">
    <location>
        <begin position="85"/>
        <end position="87"/>
    </location>
</feature>
<feature type="helix" evidence="4">
    <location>
        <begin position="91"/>
        <end position="99"/>
    </location>
</feature>
<feature type="strand" evidence="4">
    <location>
        <begin position="106"/>
        <end position="110"/>
    </location>
</feature>
<feature type="helix" evidence="4">
    <location>
        <begin position="112"/>
        <end position="114"/>
    </location>
</feature>
<feature type="helix" evidence="4">
    <location>
        <begin position="117"/>
        <end position="128"/>
    </location>
</feature>
<feature type="strand" evidence="4">
    <location>
        <begin position="153"/>
        <end position="159"/>
    </location>
</feature>
<feature type="helix" evidence="4">
    <location>
        <begin position="161"/>
        <end position="163"/>
    </location>
</feature>
<feature type="helix" evidence="4">
    <location>
        <begin position="166"/>
        <end position="169"/>
    </location>
</feature>
<feature type="strand" evidence="4">
    <location>
        <begin position="173"/>
        <end position="177"/>
    </location>
</feature>
<feature type="helix" evidence="4">
    <location>
        <begin position="183"/>
        <end position="196"/>
    </location>
</feature>
<feature type="helix" evidence="4">
    <location>
        <begin position="203"/>
        <end position="211"/>
    </location>
</feature>
<feature type="turn" evidence="4">
    <location>
        <begin position="212"/>
        <end position="215"/>
    </location>
</feature>
<feature type="helix" evidence="4">
    <location>
        <begin position="217"/>
        <end position="233"/>
    </location>
</feature>
<feature type="strand" evidence="4">
    <location>
        <begin position="237"/>
        <end position="239"/>
    </location>
</feature>
<feature type="helix" evidence="4">
    <location>
        <begin position="241"/>
        <end position="251"/>
    </location>
</feature>
<feature type="helix" evidence="4">
    <location>
        <begin position="260"/>
        <end position="271"/>
    </location>
</feature>
<feature type="helix" evidence="4">
    <location>
        <begin position="279"/>
        <end position="285"/>
    </location>
</feature>
<feature type="helix" evidence="4">
    <location>
        <begin position="290"/>
        <end position="295"/>
    </location>
</feature>
<feature type="helix" evidence="4">
    <location>
        <begin position="298"/>
        <end position="303"/>
    </location>
</feature>
<feature type="strand" evidence="4">
    <location>
        <begin position="306"/>
        <end position="310"/>
    </location>
</feature>
<feature type="strand" evidence="4">
    <location>
        <begin position="313"/>
        <end position="316"/>
    </location>
</feature>
<feature type="helix" evidence="4">
    <location>
        <begin position="318"/>
        <end position="327"/>
    </location>
</feature>
<proteinExistence type="evidence at protein level"/>
<organism>
    <name type="scientific">Campylobacter jejuni subsp. jejuni serotype O:2 (strain ATCC 700819 / NCTC 11168)</name>
    <dbReference type="NCBI Taxonomy" id="192222"/>
    <lineage>
        <taxon>Bacteria</taxon>
        <taxon>Pseudomonadati</taxon>
        <taxon>Campylobacterota</taxon>
        <taxon>Epsilonproteobacteria</taxon>
        <taxon>Campylobacterales</taxon>
        <taxon>Campylobacteraceae</taxon>
        <taxon>Campylobacter</taxon>
    </lineage>
</organism>
<reference key="1">
    <citation type="journal article" date="2000" name="Nature">
        <title>The genome sequence of the food-borne pathogen Campylobacter jejuni reveals hypervariable sequences.</title>
        <authorList>
            <person name="Parkhill J."/>
            <person name="Wren B.W."/>
            <person name="Mungall K.L."/>
            <person name="Ketley J.M."/>
            <person name="Churcher C.M."/>
            <person name="Basham D."/>
            <person name="Chillingworth T."/>
            <person name="Davies R.M."/>
            <person name="Feltwell T."/>
            <person name="Holroyd S."/>
            <person name="Jagels K."/>
            <person name="Karlyshev A.V."/>
            <person name="Moule S."/>
            <person name="Pallen M.J."/>
            <person name="Penn C.W."/>
            <person name="Quail M.A."/>
            <person name="Rajandream M.A."/>
            <person name="Rutherford K.M."/>
            <person name="van Vliet A.H.M."/>
            <person name="Whitehead S."/>
            <person name="Barrell B.G."/>
        </authorList>
    </citation>
    <scope>NUCLEOTIDE SEQUENCE [LARGE SCALE GENOMIC DNA]</scope>
    <source>
        <strain>ATCC 700819 / NCTC 11168</strain>
    </source>
</reference>
<reference evidence="3" key="2">
    <citation type="submission" date="2010-10" db="PDB data bank">
        <title>2.7 Angstrom resolution crystal structure of a probable holliday junction DNA helicase (ruvB) from Campylobacter jejuni subsp. jejuni NCTC 11168 in complex with adenosine-5'-diphosphate.</title>
        <authorList>
            <person name="Halavaty A.S."/>
            <person name="Wawrzak Z."/>
            <person name="Skarina T."/>
            <person name="Onopriyenko O."/>
            <person name="Edwards A."/>
            <person name="Savchenko A."/>
            <person name="Anderson W.F."/>
        </authorList>
    </citation>
    <scope>X-RAY CRYSTALLOGRAPHY (2.69 ANGSTROMS) IN COMPLEX WITH ADP</scope>
</reference>
<gene>
    <name evidence="1 2" type="primary">ruvB</name>
    <name type="ordered locus">Cj1362</name>
</gene>